<organism>
    <name type="scientific">Streptococcus pyogenes serotype M5 (strain Manfredo)</name>
    <dbReference type="NCBI Taxonomy" id="160491"/>
    <lineage>
        <taxon>Bacteria</taxon>
        <taxon>Bacillati</taxon>
        <taxon>Bacillota</taxon>
        <taxon>Bacilli</taxon>
        <taxon>Lactobacillales</taxon>
        <taxon>Streptococcaceae</taxon>
        <taxon>Streptococcus</taxon>
    </lineage>
</organism>
<gene>
    <name type="ordered locus">SpyM50240</name>
</gene>
<name>Y240_STRPG</name>
<protein>
    <recommendedName>
        <fullName evidence="1">UPF0340 protein SpyM50240</fullName>
    </recommendedName>
</protein>
<reference key="1">
    <citation type="journal article" date="2007" name="J. Bacteriol.">
        <title>Complete genome of acute rheumatic fever-associated serotype M5 Streptococcus pyogenes strain Manfredo.</title>
        <authorList>
            <person name="Holden M.T.G."/>
            <person name="Scott A."/>
            <person name="Cherevach I."/>
            <person name="Chillingworth T."/>
            <person name="Churcher C."/>
            <person name="Cronin A."/>
            <person name="Dowd L."/>
            <person name="Feltwell T."/>
            <person name="Hamlin N."/>
            <person name="Holroyd S."/>
            <person name="Jagels K."/>
            <person name="Moule S."/>
            <person name="Mungall K."/>
            <person name="Quail M.A."/>
            <person name="Price C."/>
            <person name="Rabbinowitsch E."/>
            <person name="Sharp S."/>
            <person name="Skelton J."/>
            <person name="Whitehead S."/>
            <person name="Barrell B.G."/>
            <person name="Kehoe M."/>
            <person name="Parkhill J."/>
        </authorList>
    </citation>
    <scope>NUCLEOTIDE SEQUENCE [LARGE SCALE GENOMIC DNA]</scope>
    <source>
        <strain>Manfredo</strain>
    </source>
</reference>
<proteinExistence type="inferred from homology"/>
<dbReference type="EMBL" id="AM295007">
    <property type="protein sequence ID" value="CAM29582.1"/>
    <property type="molecule type" value="Genomic_DNA"/>
</dbReference>
<dbReference type="RefSeq" id="WP_002995157.1">
    <property type="nucleotide sequence ID" value="NC_009332.1"/>
</dbReference>
<dbReference type="SMR" id="A2RCK9"/>
<dbReference type="KEGG" id="spf:SpyM50240"/>
<dbReference type="HOGENOM" id="CLU_106658_0_0_9"/>
<dbReference type="Gene3D" id="3.40.50.10360">
    <property type="entry name" value="Hypothetical protein TT1679"/>
    <property type="match status" value="1"/>
</dbReference>
<dbReference type="HAMAP" id="MF_00800">
    <property type="entry name" value="UPF0340"/>
    <property type="match status" value="1"/>
</dbReference>
<dbReference type="InterPro" id="IPR028345">
    <property type="entry name" value="Antibiotic_NAT-like"/>
</dbReference>
<dbReference type="InterPro" id="IPR006340">
    <property type="entry name" value="DUF436"/>
</dbReference>
<dbReference type="NCBIfam" id="TIGR01440">
    <property type="entry name" value="TIGR01440 family protein"/>
    <property type="match status" value="1"/>
</dbReference>
<dbReference type="Pfam" id="PF04260">
    <property type="entry name" value="DUF436"/>
    <property type="match status" value="1"/>
</dbReference>
<dbReference type="PIRSF" id="PIRSF007510">
    <property type="entry name" value="UCP007510"/>
    <property type="match status" value="1"/>
</dbReference>
<dbReference type="SUPFAM" id="SSF110710">
    <property type="entry name" value="TTHA0583/YokD-like"/>
    <property type="match status" value="1"/>
</dbReference>
<feature type="chain" id="PRO_1000046986" description="UPF0340 protein SpyM50240">
    <location>
        <begin position="1"/>
        <end position="186"/>
    </location>
</feature>
<sequence length="186" mass="20071">MLNNLEKQTREIVIDVVERSAIQPGNLFVLGLSSSEILGSRIGKQSSLEVGQIVVEVVLDELNKRGVHLAVQGCEHVNRALVVERHVAESKQLEIVNVVPNLHAGGSAQMAAFQLMSDPVEVEEVIAHAGLDIGDTAIGMHIKRVQIPLIPCQRELGGAHVTALASRPKLIGGARADYNMDIIRKS</sequence>
<accession>A2RCK9</accession>
<evidence type="ECO:0000255" key="1">
    <source>
        <dbReference type="HAMAP-Rule" id="MF_00800"/>
    </source>
</evidence>
<comment type="similarity">
    <text evidence="1">Belongs to the UPF0340 family.</text>
</comment>